<name>HYPA_NITMU</name>
<proteinExistence type="inferred from homology"/>
<dbReference type="EMBL" id="CP000103">
    <property type="protein sequence ID" value="ABB74963.1"/>
    <property type="molecule type" value="Genomic_DNA"/>
</dbReference>
<dbReference type="RefSeq" id="WP_011380986.1">
    <property type="nucleotide sequence ID" value="NC_007614.1"/>
</dbReference>
<dbReference type="SMR" id="Q2Y8F8"/>
<dbReference type="STRING" id="323848.Nmul_A1665"/>
<dbReference type="KEGG" id="nmu:Nmul_A1665"/>
<dbReference type="eggNOG" id="COG0375">
    <property type="taxonomic scope" value="Bacteria"/>
</dbReference>
<dbReference type="HOGENOM" id="CLU_126929_6_0_4"/>
<dbReference type="OrthoDB" id="288014at2"/>
<dbReference type="Proteomes" id="UP000002718">
    <property type="component" value="Chromosome"/>
</dbReference>
<dbReference type="GO" id="GO:0016151">
    <property type="term" value="F:nickel cation binding"/>
    <property type="evidence" value="ECO:0007669"/>
    <property type="project" value="UniProtKB-UniRule"/>
</dbReference>
<dbReference type="GO" id="GO:0008270">
    <property type="term" value="F:zinc ion binding"/>
    <property type="evidence" value="ECO:0007669"/>
    <property type="project" value="UniProtKB-UniRule"/>
</dbReference>
<dbReference type="GO" id="GO:0051604">
    <property type="term" value="P:protein maturation"/>
    <property type="evidence" value="ECO:0007669"/>
    <property type="project" value="InterPro"/>
</dbReference>
<dbReference type="GO" id="GO:0036211">
    <property type="term" value="P:protein modification process"/>
    <property type="evidence" value="ECO:0007669"/>
    <property type="project" value="UniProtKB-UniRule"/>
</dbReference>
<dbReference type="Gene3D" id="3.30.2320.80">
    <property type="match status" value="1"/>
</dbReference>
<dbReference type="HAMAP" id="MF_00213">
    <property type="entry name" value="HypA_HybF"/>
    <property type="match status" value="1"/>
</dbReference>
<dbReference type="InterPro" id="IPR000688">
    <property type="entry name" value="HypA/HybF"/>
</dbReference>
<dbReference type="PANTHER" id="PTHR34535">
    <property type="entry name" value="HYDROGENASE MATURATION FACTOR HYPA"/>
    <property type="match status" value="1"/>
</dbReference>
<dbReference type="PANTHER" id="PTHR34535:SF3">
    <property type="entry name" value="HYDROGENASE MATURATION FACTOR HYPA"/>
    <property type="match status" value="1"/>
</dbReference>
<dbReference type="Pfam" id="PF01155">
    <property type="entry name" value="HypA"/>
    <property type="match status" value="1"/>
</dbReference>
<dbReference type="PIRSF" id="PIRSF004761">
    <property type="entry name" value="Hydrgn_mat_HypA"/>
    <property type="match status" value="1"/>
</dbReference>
<accession>Q2Y8F8</accession>
<gene>
    <name evidence="1" type="primary">hypA</name>
    <name type="ordered locus">Nmul_A1665</name>
</gene>
<organism>
    <name type="scientific">Nitrosospira multiformis (strain ATCC 25196 / NCIMB 11849 / C 71)</name>
    <dbReference type="NCBI Taxonomy" id="323848"/>
    <lineage>
        <taxon>Bacteria</taxon>
        <taxon>Pseudomonadati</taxon>
        <taxon>Pseudomonadota</taxon>
        <taxon>Betaproteobacteria</taxon>
        <taxon>Nitrosomonadales</taxon>
        <taxon>Nitrosomonadaceae</taxon>
        <taxon>Nitrosospira</taxon>
    </lineage>
</organism>
<evidence type="ECO:0000255" key="1">
    <source>
        <dbReference type="HAMAP-Rule" id="MF_00213"/>
    </source>
</evidence>
<keyword id="KW-0479">Metal-binding</keyword>
<keyword id="KW-0533">Nickel</keyword>
<keyword id="KW-1185">Reference proteome</keyword>
<keyword id="KW-0862">Zinc</keyword>
<comment type="function">
    <text evidence="1">Involved in the maturation of [NiFe] hydrogenases. Required for nickel insertion into the metal center of the hydrogenase.</text>
</comment>
<comment type="similarity">
    <text evidence="1">Belongs to the HypA/HybF family.</text>
</comment>
<sequence length="115" mass="12329">MHEFSICQALITQVEQIAISHGALKVQSVKLRIGSLSGVELPLLEHAYPFASAGTLVEGSTLEIERAPLKVNCEACGLESEVKANLLTCRMCGSCLIRVVSGEELTLMSVELITT</sequence>
<feature type="chain" id="PRO_1000023844" description="Hydrogenase maturation factor HypA">
    <location>
        <begin position="1"/>
        <end position="115"/>
    </location>
</feature>
<feature type="binding site" evidence="1">
    <location>
        <position position="2"/>
    </location>
    <ligand>
        <name>Ni(2+)</name>
        <dbReference type="ChEBI" id="CHEBI:49786"/>
    </ligand>
</feature>
<feature type="binding site" evidence="1">
    <location>
        <position position="73"/>
    </location>
    <ligand>
        <name>Zn(2+)</name>
        <dbReference type="ChEBI" id="CHEBI:29105"/>
    </ligand>
</feature>
<feature type="binding site" evidence="1">
    <location>
        <position position="76"/>
    </location>
    <ligand>
        <name>Zn(2+)</name>
        <dbReference type="ChEBI" id="CHEBI:29105"/>
    </ligand>
</feature>
<feature type="binding site" evidence="1">
    <location>
        <position position="89"/>
    </location>
    <ligand>
        <name>Zn(2+)</name>
        <dbReference type="ChEBI" id="CHEBI:29105"/>
    </ligand>
</feature>
<feature type="binding site" evidence="1">
    <location>
        <position position="92"/>
    </location>
    <ligand>
        <name>Zn(2+)</name>
        <dbReference type="ChEBI" id="CHEBI:29105"/>
    </ligand>
</feature>
<reference key="1">
    <citation type="submission" date="2005-08" db="EMBL/GenBank/DDBJ databases">
        <title>Complete sequence of chromosome 1 of Nitrosospira multiformis ATCC 25196.</title>
        <authorList>
            <person name="Copeland A."/>
            <person name="Lucas S."/>
            <person name="Lapidus A."/>
            <person name="Barry K."/>
            <person name="Detter J.C."/>
            <person name="Glavina T."/>
            <person name="Hammon N."/>
            <person name="Israni S."/>
            <person name="Pitluck S."/>
            <person name="Chain P."/>
            <person name="Malfatti S."/>
            <person name="Shin M."/>
            <person name="Vergez L."/>
            <person name="Schmutz J."/>
            <person name="Larimer F."/>
            <person name="Land M."/>
            <person name="Hauser L."/>
            <person name="Kyrpides N."/>
            <person name="Lykidis A."/>
            <person name="Richardson P."/>
        </authorList>
    </citation>
    <scope>NUCLEOTIDE SEQUENCE [LARGE SCALE GENOMIC DNA]</scope>
    <source>
        <strain>ATCC 25196 / NCIMB 11849 / C 71</strain>
    </source>
</reference>
<protein>
    <recommendedName>
        <fullName evidence="1">Hydrogenase maturation factor HypA</fullName>
    </recommendedName>
</protein>